<gene>
    <name evidence="1" type="primary">dap</name>
    <name type="ordered locus">BCAN_B0968</name>
</gene>
<accession>A9MCM7</accession>
<reference key="1">
    <citation type="submission" date="2007-10" db="EMBL/GenBank/DDBJ databases">
        <title>Brucella canis ATCC 23365 whole genome shotgun sequencing project.</title>
        <authorList>
            <person name="Setubal J.C."/>
            <person name="Bowns C."/>
            <person name="Boyle S."/>
            <person name="Crasta O.R."/>
            <person name="Czar M.J."/>
            <person name="Dharmanolla C."/>
            <person name="Gillespie J.J."/>
            <person name="Kenyon R.W."/>
            <person name="Lu J."/>
            <person name="Mane S."/>
            <person name="Mohapatra S."/>
            <person name="Nagrani S."/>
            <person name="Purkayastha A."/>
            <person name="Rajasimha H.K."/>
            <person name="Shallom J.M."/>
            <person name="Shallom S."/>
            <person name="Shukla M."/>
            <person name="Snyder E.E."/>
            <person name="Sobral B.W."/>
            <person name="Wattam A.R."/>
            <person name="Will R."/>
            <person name="Williams K."/>
            <person name="Yoo H."/>
            <person name="Bruce D."/>
            <person name="Detter C."/>
            <person name="Munk C."/>
            <person name="Brettin T.S."/>
        </authorList>
    </citation>
    <scope>NUCLEOTIDE SEQUENCE [LARGE SCALE GENOMIC DNA]</scope>
    <source>
        <strain>ATCC 23365 / NCTC 10854 / RM-666</strain>
    </source>
</reference>
<keyword id="KW-0031">Aminopeptidase</keyword>
<keyword id="KW-0378">Hydrolase</keyword>
<keyword id="KW-0645">Protease</keyword>
<keyword id="KW-1185">Reference proteome</keyword>
<name>DAP_BRUC2</name>
<evidence type="ECO:0000255" key="1">
    <source>
        <dbReference type="HAMAP-Rule" id="MF_01960"/>
    </source>
</evidence>
<comment type="function">
    <text evidence="1">Hydrolyzes N-terminal residues in D-amino acid-containing peptides.</text>
</comment>
<comment type="catalytic activity">
    <reaction evidence="1">
        <text>Release of an N-terminal D-amino acid from a peptide, Xaa-|-Yaa-, in which Xaa is preferably D-Ala, D-Ser or D-Thr. D-amino acid amides and methyl esters also are hydrolyzed, as is glycine amide.</text>
        <dbReference type="EC" id="3.4.11.19"/>
    </reaction>
</comment>
<comment type="activity regulation">
    <text evidence="1">Inhibited by beta-lactam compounds such as 6-aminopenicillic acid, 7-aminocephalosporanic acid, benzylpenicillin and ampicillin. Inhibited by p-chloromercuribenzoate.</text>
</comment>
<comment type="subunit">
    <text evidence="1">Homodimer.</text>
</comment>
<comment type="similarity">
    <text evidence="1">Belongs to the peptidase S12 family.</text>
</comment>
<proteinExistence type="inferred from homology"/>
<dbReference type="EC" id="3.4.11.19" evidence="1"/>
<dbReference type="EMBL" id="CP000873">
    <property type="protein sequence ID" value="ABX64114.1"/>
    <property type="molecule type" value="Genomic_DNA"/>
</dbReference>
<dbReference type="RefSeq" id="WP_002965700.1">
    <property type="nucleotide sequence ID" value="NC_010104.1"/>
</dbReference>
<dbReference type="SMR" id="A9MCM7"/>
<dbReference type="MEROPS" id="S12.002"/>
<dbReference type="KEGG" id="bcs:BCAN_B0968"/>
<dbReference type="HOGENOM" id="CLU_020027_0_4_5"/>
<dbReference type="Proteomes" id="UP000001385">
    <property type="component" value="Chromosome II"/>
</dbReference>
<dbReference type="GO" id="GO:0004177">
    <property type="term" value="F:aminopeptidase activity"/>
    <property type="evidence" value="ECO:0007669"/>
    <property type="project" value="UniProtKB-UniRule"/>
</dbReference>
<dbReference type="GO" id="GO:0006508">
    <property type="term" value="P:proteolysis"/>
    <property type="evidence" value="ECO:0007669"/>
    <property type="project" value="UniProtKB-KW"/>
</dbReference>
<dbReference type="Gene3D" id="2.40.128.50">
    <property type="match status" value="2"/>
</dbReference>
<dbReference type="Gene3D" id="3.40.710.10">
    <property type="entry name" value="DD-peptidase/beta-lactamase superfamily"/>
    <property type="match status" value="1"/>
</dbReference>
<dbReference type="HAMAP" id="MF_01960">
    <property type="entry name" value="D_aminopeptidase"/>
    <property type="match status" value="1"/>
</dbReference>
<dbReference type="InterPro" id="IPR050491">
    <property type="entry name" value="Bact_CellWall_Synth/Modif"/>
</dbReference>
<dbReference type="InterPro" id="IPR001466">
    <property type="entry name" value="Beta-lactam-related"/>
</dbReference>
<dbReference type="InterPro" id="IPR012338">
    <property type="entry name" value="Beta-lactam/transpept-like"/>
</dbReference>
<dbReference type="InterPro" id="IPR027279">
    <property type="entry name" value="D_amino_pept/lipop_sf"/>
</dbReference>
<dbReference type="InterPro" id="IPR023645">
    <property type="entry name" value="DAP"/>
</dbReference>
<dbReference type="InterPro" id="IPR012856">
    <property type="entry name" value="DAP_B_dom"/>
</dbReference>
<dbReference type="NCBIfam" id="NF009622">
    <property type="entry name" value="PRK13128.1"/>
    <property type="match status" value="1"/>
</dbReference>
<dbReference type="PANTHER" id="PTHR46825:SF9">
    <property type="entry name" value="BETA-LACTAMASE-RELATED DOMAIN-CONTAINING PROTEIN"/>
    <property type="match status" value="1"/>
</dbReference>
<dbReference type="PANTHER" id="PTHR46825">
    <property type="entry name" value="D-ALANYL-D-ALANINE-CARBOXYPEPTIDASE/ENDOPEPTIDASE AMPH"/>
    <property type="match status" value="1"/>
</dbReference>
<dbReference type="Pfam" id="PF00144">
    <property type="entry name" value="Beta-lactamase"/>
    <property type="match status" value="1"/>
</dbReference>
<dbReference type="Pfam" id="PF07930">
    <property type="entry name" value="DAP_B"/>
    <property type="match status" value="1"/>
</dbReference>
<dbReference type="SUPFAM" id="SSF56601">
    <property type="entry name" value="beta-lactamase/transpeptidase-like"/>
    <property type="match status" value="1"/>
</dbReference>
<dbReference type="SUPFAM" id="SSF50886">
    <property type="entry name" value="D-aminopeptidase, middle and C-terminal domains"/>
    <property type="match status" value="2"/>
</dbReference>
<feature type="chain" id="PRO_1000088535" description="D-aminopeptidase">
    <location>
        <begin position="1"/>
        <end position="518"/>
    </location>
</feature>
<feature type="region of interest" description="Important for specificity" evidence="1">
    <location>
        <begin position="477"/>
        <end position="487"/>
    </location>
</feature>
<feature type="active site" description="Nucleophile" evidence="1">
    <location>
        <position position="62"/>
    </location>
</feature>
<feature type="active site" description="Proton donor/acceptor" evidence="1">
    <location>
        <position position="65"/>
    </location>
</feature>
<feature type="binding site" evidence="1">
    <location>
        <position position="481"/>
    </location>
    <ligand>
        <name>substrate</name>
    </ligand>
</feature>
<protein>
    <recommendedName>
        <fullName evidence="1">D-aminopeptidase</fullName>
        <ecNumber evidence="1">3.4.11.19</ecNumber>
    </recommendedName>
</protein>
<organism>
    <name type="scientific">Brucella canis (strain ATCC 23365 / NCTC 10854 / RM-666)</name>
    <dbReference type="NCBI Taxonomy" id="483179"/>
    <lineage>
        <taxon>Bacteria</taxon>
        <taxon>Pseudomonadati</taxon>
        <taxon>Pseudomonadota</taxon>
        <taxon>Alphaproteobacteria</taxon>
        <taxon>Hyphomicrobiales</taxon>
        <taxon>Brucellaceae</taxon>
        <taxon>Brucella/Ochrobactrum group</taxon>
        <taxon>Brucella</taxon>
    </lineage>
</organism>
<sequence>MPNIDLPTLEAFVHAIPQNYKGPGGAVAVVRNGEIVLRHAWGFADLAARKAMTPETRMPICSVSKQFTCAVLLDCIGEPEMLDSALAAYLDQFEDGRPAVRDLCNNQSGLRDYWALTVLCGAAPEGIFLPDQAQNLLRRLKTTHFAPGTHYSYCNGNFRILADLIEQHTGRSLADLLAERIFAPAAMKTAELIPDTALFNECTGYEGDTVRGFLPAINRIHWLGDAGICASLDDMIAWEQFIDRTRHDENGLYRRLSSPQTFADGAPAPYGFGLKFEETGGKRLTGHGGALRGWRCQRWHCADERISTIVMFNFEGNASDAALKMMNAALGIPPAKPVRAQANPGWFGSWLNPETGLVLSLEDAGGGRMKARFGTGPEIMDISGENEAQSSMTTLRRDGDMIHLARKDENLHLAMHRLKGEARQDIAGRYRSDELEADLLLVSEGGAIYGAFEGFLGKSDMYPLYAAGPDVWLLPVQRSMDAPSPGEWKLVFHRDAAGRITGVTVGCWLARGVEYKRL</sequence>